<organism>
    <name type="scientific">Dictyostelium discoideum</name>
    <name type="common">Social amoeba</name>
    <dbReference type="NCBI Taxonomy" id="44689"/>
    <lineage>
        <taxon>Eukaryota</taxon>
        <taxon>Amoebozoa</taxon>
        <taxon>Evosea</taxon>
        <taxon>Eumycetozoa</taxon>
        <taxon>Dictyostelia</taxon>
        <taxon>Dictyosteliales</taxon>
        <taxon>Dictyosteliaceae</taxon>
        <taxon>Dictyostelium</taxon>
    </lineage>
</organism>
<evidence type="ECO:0000250" key="1"/>
<evidence type="ECO:0000255" key="2"/>
<evidence type="ECO:0000255" key="3">
    <source>
        <dbReference type="PROSITE-ProRule" id="PRU00703"/>
    </source>
</evidence>
<evidence type="ECO:0000305" key="4"/>
<protein>
    <recommendedName>
        <fullName>Chloride channel protein C</fullName>
    </recommendedName>
</protein>
<feature type="chain" id="PRO_0000328045" description="Chloride channel protein C">
    <location>
        <begin position="1"/>
        <end position="757"/>
    </location>
</feature>
<feature type="topological domain" description="Cytoplasmic" evidence="2">
    <location>
        <begin position="1"/>
        <end position="96"/>
    </location>
</feature>
<feature type="transmembrane region" description="Helical" evidence="2">
    <location>
        <begin position="97"/>
        <end position="117"/>
    </location>
</feature>
<feature type="transmembrane region" description="Helical" evidence="2">
    <location>
        <begin position="141"/>
        <end position="161"/>
    </location>
</feature>
<feature type="transmembrane region" description="Helical" evidence="2">
    <location>
        <begin position="196"/>
        <end position="216"/>
    </location>
</feature>
<feature type="transmembrane region" description="Helical" evidence="2">
    <location>
        <begin position="253"/>
        <end position="273"/>
    </location>
</feature>
<feature type="transmembrane region" description="Helical" evidence="2">
    <location>
        <begin position="292"/>
        <end position="312"/>
    </location>
</feature>
<feature type="transmembrane region" description="Helical" evidence="2">
    <location>
        <begin position="337"/>
        <end position="357"/>
    </location>
</feature>
<feature type="transmembrane region" description="Helical" evidence="2">
    <location>
        <begin position="378"/>
        <end position="398"/>
    </location>
</feature>
<feature type="transmembrane region" description="Helical" evidence="2">
    <location>
        <begin position="462"/>
        <end position="482"/>
    </location>
</feature>
<feature type="transmembrane region" description="Helical" evidence="2">
    <location>
        <begin position="484"/>
        <end position="504"/>
    </location>
</feature>
<feature type="transmembrane region" description="Helical" evidence="2">
    <location>
        <begin position="506"/>
        <end position="526"/>
    </location>
</feature>
<feature type="transmembrane region" description="Helical" evidence="2">
    <location>
        <begin position="535"/>
        <end position="555"/>
    </location>
</feature>
<feature type="domain" description="CBS 1" evidence="3">
    <location>
        <begin position="600"/>
        <end position="667"/>
    </location>
</feature>
<feature type="domain" description="CBS 2" evidence="3">
    <location>
        <begin position="710"/>
        <end position="757"/>
    </location>
</feature>
<keyword id="KW-0129">CBS domain</keyword>
<keyword id="KW-0868">Chloride</keyword>
<keyword id="KW-0869">Chloride channel</keyword>
<keyword id="KW-0407">Ion channel</keyword>
<keyword id="KW-0406">Ion transport</keyword>
<keyword id="KW-0472">Membrane</keyword>
<keyword id="KW-1185">Reference proteome</keyword>
<keyword id="KW-0677">Repeat</keyword>
<keyword id="KW-0812">Transmembrane</keyword>
<keyword id="KW-1133">Transmembrane helix</keyword>
<keyword id="KW-0813">Transport</keyword>
<keyword id="KW-0851">Voltage-gated channel</keyword>
<reference key="1">
    <citation type="journal article" date="2002" name="Nature">
        <title>Sequence and analysis of chromosome 2 of Dictyostelium discoideum.</title>
        <authorList>
            <person name="Gloeckner G."/>
            <person name="Eichinger L."/>
            <person name="Szafranski K."/>
            <person name="Pachebat J.A."/>
            <person name="Bankier A.T."/>
            <person name="Dear P.H."/>
            <person name="Lehmann R."/>
            <person name="Baumgart C."/>
            <person name="Parra G."/>
            <person name="Abril J.F."/>
            <person name="Guigo R."/>
            <person name="Kumpf K."/>
            <person name="Tunggal B."/>
            <person name="Cox E.C."/>
            <person name="Quail M.A."/>
            <person name="Platzer M."/>
            <person name="Rosenthal A."/>
            <person name="Noegel A.A."/>
        </authorList>
    </citation>
    <scope>NUCLEOTIDE SEQUENCE [LARGE SCALE GENOMIC DNA]</scope>
    <source>
        <strain>AX4</strain>
    </source>
</reference>
<reference key="2">
    <citation type="journal article" date="2005" name="Nature">
        <title>The genome of the social amoeba Dictyostelium discoideum.</title>
        <authorList>
            <person name="Eichinger L."/>
            <person name="Pachebat J.A."/>
            <person name="Gloeckner G."/>
            <person name="Rajandream M.A."/>
            <person name="Sucgang R."/>
            <person name="Berriman M."/>
            <person name="Song J."/>
            <person name="Olsen R."/>
            <person name="Szafranski K."/>
            <person name="Xu Q."/>
            <person name="Tunggal B."/>
            <person name="Kummerfeld S."/>
            <person name="Madera M."/>
            <person name="Konfortov B.A."/>
            <person name="Rivero F."/>
            <person name="Bankier A.T."/>
            <person name="Lehmann R."/>
            <person name="Hamlin N."/>
            <person name="Davies R."/>
            <person name="Gaudet P."/>
            <person name="Fey P."/>
            <person name="Pilcher K."/>
            <person name="Chen G."/>
            <person name="Saunders D."/>
            <person name="Sodergren E.J."/>
            <person name="Davis P."/>
            <person name="Kerhornou A."/>
            <person name="Nie X."/>
            <person name="Hall N."/>
            <person name="Anjard C."/>
            <person name="Hemphill L."/>
            <person name="Bason N."/>
            <person name="Farbrother P."/>
            <person name="Desany B."/>
            <person name="Just E."/>
            <person name="Morio T."/>
            <person name="Rost R."/>
            <person name="Churcher C.M."/>
            <person name="Cooper J."/>
            <person name="Haydock S."/>
            <person name="van Driessche N."/>
            <person name="Cronin A."/>
            <person name="Goodhead I."/>
            <person name="Muzny D.M."/>
            <person name="Mourier T."/>
            <person name="Pain A."/>
            <person name="Lu M."/>
            <person name="Harper D."/>
            <person name="Lindsay R."/>
            <person name="Hauser H."/>
            <person name="James K.D."/>
            <person name="Quiles M."/>
            <person name="Madan Babu M."/>
            <person name="Saito T."/>
            <person name="Buchrieser C."/>
            <person name="Wardroper A."/>
            <person name="Felder M."/>
            <person name="Thangavelu M."/>
            <person name="Johnson D."/>
            <person name="Knights A."/>
            <person name="Loulseged H."/>
            <person name="Mungall K.L."/>
            <person name="Oliver K."/>
            <person name="Price C."/>
            <person name="Quail M.A."/>
            <person name="Urushihara H."/>
            <person name="Hernandez J."/>
            <person name="Rabbinowitsch E."/>
            <person name="Steffen D."/>
            <person name="Sanders M."/>
            <person name="Ma J."/>
            <person name="Kohara Y."/>
            <person name="Sharp S."/>
            <person name="Simmonds M.N."/>
            <person name="Spiegler S."/>
            <person name="Tivey A."/>
            <person name="Sugano S."/>
            <person name="White B."/>
            <person name="Walker D."/>
            <person name="Woodward J.R."/>
            <person name="Winckler T."/>
            <person name="Tanaka Y."/>
            <person name="Shaulsky G."/>
            <person name="Schleicher M."/>
            <person name="Weinstock G.M."/>
            <person name="Rosenthal A."/>
            <person name="Cox E.C."/>
            <person name="Chisholm R.L."/>
            <person name="Gibbs R.A."/>
            <person name="Loomis W.F."/>
            <person name="Platzer M."/>
            <person name="Kay R.R."/>
            <person name="Williams J.G."/>
            <person name="Dear P.H."/>
            <person name="Noegel A.A."/>
            <person name="Barrell B.G."/>
            <person name="Kuspa A."/>
        </authorList>
    </citation>
    <scope>NUCLEOTIDE SEQUENCE [LARGE SCALE GENOMIC DNA]</scope>
    <source>
        <strain>AX4</strain>
    </source>
</reference>
<name>CLCC_DICDI</name>
<gene>
    <name type="primary">clcC</name>
    <name type="ORF">DDB_G0276229</name>
</gene>
<dbReference type="EMBL" id="AAFI02000014">
    <property type="protein sequence ID" value="EAL69414.1"/>
    <property type="molecule type" value="Genomic_DNA"/>
</dbReference>
<dbReference type="RefSeq" id="XP_643243.1">
    <property type="nucleotide sequence ID" value="XM_638151.1"/>
</dbReference>
<dbReference type="SMR" id="Q75JF3"/>
<dbReference type="FunCoup" id="Q75JF3">
    <property type="interactions" value="404"/>
</dbReference>
<dbReference type="PaxDb" id="44689-DDB0233304"/>
<dbReference type="EnsemblProtists" id="EAL69414">
    <property type="protein sequence ID" value="EAL69414"/>
    <property type="gene ID" value="DDB_G0276229"/>
</dbReference>
<dbReference type="GeneID" id="8620286"/>
<dbReference type="KEGG" id="ddi:DDB_G0276229"/>
<dbReference type="dictyBase" id="DDB_G0276229">
    <property type="gene designation" value="clcC"/>
</dbReference>
<dbReference type="VEuPathDB" id="AmoebaDB:DDB_G0276229"/>
<dbReference type="eggNOG" id="KOG0474">
    <property type="taxonomic scope" value="Eukaryota"/>
</dbReference>
<dbReference type="HOGENOM" id="CLU_003181_4_1_1"/>
<dbReference type="InParanoid" id="Q75JF3"/>
<dbReference type="OMA" id="FMHEHIH"/>
<dbReference type="PhylomeDB" id="Q75JF3"/>
<dbReference type="PRO" id="PR:Q75JF3"/>
<dbReference type="Proteomes" id="UP000002195">
    <property type="component" value="Chromosome 2"/>
</dbReference>
<dbReference type="GO" id="GO:0034707">
    <property type="term" value="C:chloride channel complex"/>
    <property type="evidence" value="ECO:0007669"/>
    <property type="project" value="UniProtKB-KW"/>
</dbReference>
<dbReference type="GO" id="GO:0043231">
    <property type="term" value="C:intracellular membrane-bounded organelle"/>
    <property type="evidence" value="ECO:0000318"/>
    <property type="project" value="GO_Central"/>
</dbReference>
<dbReference type="GO" id="GO:0005254">
    <property type="term" value="F:chloride channel activity"/>
    <property type="evidence" value="ECO:0007669"/>
    <property type="project" value="UniProtKB-KW"/>
</dbReference>
<dbReference type="GO" id="GO:0015108">
    <property type="term" value="F:chloride transmembrane transporter activity"/>
    <property type="evidence" value="ECO:0000318"/>
    <property type="project" value="GO_Central"/>
</dbReference>
<dbReference type="CDD" id="cd04591">
    <property type="entry name" value="CBS_pair_voltage-gated_CLC_euk_bac"/>
    <property type="match status" value="1"/>
</dbReference>
<dbReference type="CDD" id="cd03685">
    <property type="entry name" value="ClC_6_like"/>
    <property type="match status" value="1"/>
</dbReference>
<dbReference type="Gene3D" id="3.10.580.10">
    <property type="entry name" value="CBS-domain"/>
    <property type="match status" value="1"/>
</dbReference>
<dbReference type="Gene3D" id="1.10.3080.10">
    <property type="entry name" value="Clc chloride channel"/>
    <property type="match status" value="1"/>
</dbReference>
<dbReference type="InterPro" id="IPR000644">
    <property type="entry name" value="CBS_dom"/>
</dbReference>
<dbReference type="InterPro" id="IPR046342">
    <property type="entry name" value="CBS_dom_sf"/>
</dbReference>
<dbReference type="InterPro" id="IPR051280">
    <property type="entry name" value="Cl-channel/antiporter"/>
</dbReference>
<dbReference type="InterPro" id="IPR014743">
    <property type="entry name" value="Cl-channel_core"/>
</dbReference>
<dbReference type="InterPro" id="IPR001807">
    <property type="entry name" value="ClC"/>
</dbReference>
<dbReference type="PANTHER" id="PTHR11689:SF60">
    <property type="entry name" value="CHLORIDE CHANNEL PROTEIN C"/>
    <property type="match status" value="1"/>
</dbReference>
<dbReference type="PANTHER" id="PTHR11689">
    <property type="entry name" value="CHLORIDE CHANNEL PROTEIN CLC FAMILY MEMBER"/>
    <property type="match status" value="1"/>
</dbReference>
<dbReference type="Pfam" id="PF00571">
    <property type="entry name" value="CBS"/>
    <property type="match status" value="2"/>
</dbReference>
<dbReference type="Pfam" id="PF00654">
    <property type="entry name" value="Voltage_CLC"/>
    <property type="match status" value="1"/>
</dbReference>
<dbReference type="PRINTS" id="PR00762">
    <property type="entry name" value="CLCHANNEL"/>
</dbReference>
<dbReference type="SMART" id="SM00116">
    <property type="entry name" value="CBS"/>
    <property type="match status" value="2"/>
</dbReference>
<dbReference type="SUPFAM" id="SSF54631">
    <property type="entry name" value="CBS-domain pair"/>
    <property type="match status" value="1"/>
</dbReference>
<dbReference type="SUPFAM" id="SSF81340">
    <property type="entry name" value="Clc chloride channel"/>
    <property type="match status" value="1"/>
</dbReference>
<dbReference type="PROSITE" id="PS51371">
    <property type="entry name" value="CBS"/>
    <property type="match status" value="2"/>
</dbReference>
<accession>Q75JF3</accession>
<accession>Q552G7</accession>
<proteinExistence type="inferred from homology"/>
<comment type="function">
    <text evidence="1">Voltage-gated chloride channel. Chloride channels may have several functions including the regulation of cell volume, membrane potential stabilization and signal transduction (By similarity).</text>
</comment>
<comment type="subcellular location">
    <subcellularLocation>
        <location evidence="1">Membrane</location>
        <topology evidence="1">Multi-pass membrane protein</topology>
    </subcellularLocation>
</comment>
<comment type="similarity">
    <text evidence="4">Belongs to the chloride channel (TC 2.A.49) family.</text>
</comment>
<sequence length="757" mass="85415">MGSSLNKPLSDRVEDINNQSSMIYDPWRHRGDVNSTYHSSSSVTHRRRNHRLSPLEKQKMKNIQSLNFSVNDNLLQREEYEKTTKGLHLKKTFGKWIICLFLGVIVGCIAYVIKMVVQLLQGLKFHYTNHYVSNGLQGEAFLTFLGINLLFVFLSCLMVIVAGPLASSSGIPEVKGILNGVKVREALGFRALLGKIVSLVLSFSSGLFVGPEGPMIHIGSAVGAAISQFKSSTMGFYPSLFLSYRNDRDKRDFISIGAATGLAAAFGAPIGGVLFSIEEVSSFWSRQLTWRTFFTCVIAAFTTNFLLQGIGSSPDMHDTGLLTFGFSRLYLFRYSELLCFCFLGLIGGLLGAFFVFLNIHLNKWRKEKLKQNPYLRLFEALFVSVVTSVVCYYASFIFDCRYQSNIVIETSVCEDQSNTEMVQFFCPDGMYSELGSLLFGNPDQALRRLYSRTNNMFTLPPLLVFTLISLFFSIWSSGLWVAGGLFVPMMMVGAGFGRLFGQTISMWFTNIDSSIYALVGSAAMMAGYCRMTVCIVVIMVELTEGTQYLVPIILAVMISKWVGDFFNESVYEHLMEQKSIPFLQSKPPHSTNNIRISDVMSKNVVVLPEVCQVRLLVNILNSNNHNAFPVINSGPYDNQRLYRGIILRDHILVLLFYRVFYRGTGEEIYLDENFDFDKFTTETSKSPPPLSEMNFDQFELDSFIDLRPYMNSSGVTIHNTFSFVEAYKLFRNMGLRHLPVIDINNEVVGMVTRNDLF</sequence>